<organism>
    <name type="scientific">Homo sapiens</name>
    <name type="common">Human</name>
    <dbReference type="NCBI Taxonomy" id="9606"/>
    <lineage>
        <taxon>Eukaryota</taxon>
        <taxon>Metazoa</taxon>
        <taxon>Chordata</taxon>
        <taxon>Craniata</taxon>
        <taxon>Vertebrata</taxon>
        <taxon>Euteleostomi</taxon>
        <taxon>Mammalia</taxon>
        <taxon>Eutheria</taxon>
        <taxon>Euarchontoglires</taxon>
        <taxon>Primates</taxon>
        <taxon>Haplorrhini</taxon>
        <taxon>Catarrhini</taxon>
        <taxon>Hominidae</taxon>
        <taxon>Homo</taxon>
    </lineage>
</organism>
<protein>
    <recommendedName>
        <fullName>Suppressor of SWI4 1 homolog</fullName>
        <shortName>Ssf-1</shortName>
    </recommendedName>
    <alternativeName>
        <fullName>Brix domain-containing protein 3</fullName>
    </alternativeName>
    <alternativeName>
        <fullName>Peter Pan homolog</fullName>
    </alternativeName>
</protein>
<dbReference type="EMBL" id="AJ292529">
    <property type="protein sequence ID" value="CAB99252.1"/>
    <property type="molecule type" value="mRNA"/>
</dbReference>
<dbReference type="EMBL" id="AC020931">
    <property type="status" value="NOT_ANNOTATED_CDS"/>
    <property type="molecule type" value="Genomic_DNA"/>
</dbReference>
<dbReference type="EMBL" id="BC000535">
    <property type="protein sequence ID" value="AAH00535.2"/>
    <property type="molecule type" value="mRNA"/>
</dbReference>
<dbReference type="EMBL" id="BC009833">
    <property type="protein sequence ID" value="AAH09833.1"/>
    <property type="molecule type" value="mRNA"/>
</dbReference>
<dbReference type="EMBL" id="BC033202">
    <property type="protein sequence ID" value="AAH33202.1"/>
    <property type="molecule type" value="mRNA"/>
</dbReference>
<dbReference type="EMBL" id="BC171852">
    <property type="status" value="NOT_ANNOTATED_CDS"/>
    <property type="molecule type" value="mRNA"/>
</dbReference>
<dbReference type="EMBL" id="AJ300588">
    <property type="protein sequence ID" value="CAC18877.1"/>
    <property type="status" value="ALT_TERM"/>
    <property type="molecule type" value="mRNA"/>
</dbReference>
<dbReference type="CCDS" id="CCDS12225.1">
    <molecule id="Q9NQ55-1"/>
</dbReference>
<dbReference type="PIR" id="JC7359">
    <property type="entry name" value="JC7359"/>
</dbReference>
<dbReference type="RefSeq" id="NP_001035754.1">
    <property type="nucleotide sequence ID" value="NM_001040664.2"/>
</dbReference>
<dbReference type="RefSeq" id="NP_064615.3">
    <molecule id="Q9NQ55-1"/>
    <property type="nucleotide sequence ID" value="NM_020230.6"/>
</dbReference>
<dbReference type="PDB" id="8FKP">
    <property type="method" value="EM"/>
    <property type="resolution" value="2.85 A"/>
    <property type="chains" value="NN=1-473"/>
</dbReference>
<dbReference type="PDB" id="8FKQ">
    <property type="method" value="EM"/>
    <property type="resolution" value="2.76 A"/>
    <property type="chains" value="NN=1-473"/>
</dbReference>
<dbReference type="PDB" id="8FKR">
    <property type="method" value="EM"/>
    <property type="resolution" value="2.89 A"/>
    <property type="chains" value="NN=1-473"/>
</dbReference>
<dbReference type="PDB" id="8FKS">
    <property type="method" value="EM"/>
    <property type="resolution" value="2.88 A"/>
    <property type="chains" value="NN=1-473"/>
</dbReference>
<dbReference type="PDBsum" id="8FKP"/>
<dbReference type="PDBsum" id="8FKQ"/>
<dbReference type="PDBsum" id="8FKR"/>
<dbReference type="PDBsum" id="8FKS"/>
<dbReference type="EMDB" id="EMD-29252"/>
<dbReference type="EMDB" id="EMD-29253"/>
<dbReference type="EMDB" id="EMD-29254"/>
<dbReference type="EMDB" id="EMD-29255"/>
<dbReference type="SMR" id="Q9NQ55"/>
<dbReference type="BioGRID" id="121141">
    <property type="interactions" value="308"/>
</dbReference>
<dbReference type="BioGRID" id="593098">
    <property type="interactions" value="165"/>
</dbReference>
<dbReference type="FunCoup" id="Q9NQ55">
    <property type="interactions" value="2561"/>
</dbReference>
<dbReference type="IntAct" id="Q9NQ55">
    <property type="interactions" value="241"/>
</dbReference>
<dbReference type="MINT" id="Q9NQ55"/>
<dbReference type="STRING" id="9606.ENSP00000253107"/>
<dbReference type="iPTMnet" id="Q9NQ55"/>
<dbReference type="MetOSite" id="Q9NQ55"/>
<dbReference type="PhosphoSitePlus" id="Q9NQ55"/>
<dbReference type="SwissPalm" id="Q9NQ55"/>
<dbReference type="BioMuta" id="PPAN"/>
<dbReference type="DMDM" id="21264056"/>
<dbReference type="jPOST" id="Q9NQ55"/>
<dbReference type="MassIVE" id="Q9NQ55"/>
<dbReference type="PaxDb" id="9606-ENSP00000253107"/>
<dbReference type="PeptideAtlas" id="Q9NQ55"/>
<dbReference type="ProteomicsDB" id="82082">
    <molecule id="Q9NQ55-1"/>
</dbReference>
<dbReference type="ProteomicsDB" id="82083">
    <molecule id="Q9NQ55-2"/>
</dbReference>
<dbReference type="ProteomicsDB" id="8341"/>
<dbReference type="Pumba" id="Q9NQ55"/>
<dbReference type="Antibodypedia" id="42826">
    <property type="antibodies" value="158 antibodies from 25 providers"/>
</dbReference>
<dbReference type="DNASU" id="56342"/>
<dbReference type="DNASU" id="692312"/>
<dbReference type="Ensembl" id="ENST00000253107.12">
    <molecule id="Q9NQ55-1"/>
    <property type="protein sequence ID" value="ENSP00000253107.7"/>
    <property type="gene ID" value="ENSG00000130810.20"/>
</dbReference>
<dbReference type="GeneID" id="56342"/>
<dbReference type="GeneID" id="692312"/>
<dbReference type="KEGG" id="hsa:56342"/>
<dbReference type="KEGG" id="hsa:692312"/>
<dbReference type="MANE-Select" id="ENST00000253107.12">
    <property type="protein sequence ID" value="ENSP00000253107.7"/>
    <property type="RefSeq nucleotide sequence ID" value="NM_020230.7"/>
    <property type="RefSeq protein sequence ID" value="NP_064615.3"/>
</dbReference>
<dbReference type="UCSC" id="uc002mmz.3">
    <molecule id="Q9NQ55-1"/>
    <property type="organism name" value="human"/>
</dbReference>
<dbReference type="AGR" id="HGNC:33526"/>
<dbReference type="AGR" id="HGNC:9227"/>
<dbReference type="CTD" id="56342"/>
<dbReference type="CTD" id="692312"/>
<dbReference type="DisGeNET" id="56342"/>
<dbReference type="DisGeNET" id="692312"/>
<dbReference type="GeneCards" id="PPAN"/>
<dbReference type="HGNC" id="HGNC:9227">
    <property type="gene designation" value="PPAN"/>
</dbReference>
<dbReference type="HPA" id="ENSG00000130810">
    <property type="expression patterns" value="Low tissue specificity"/>
</dbReference>
<dbReference type="MalaCards" id="PPAN"/>
<dbReference type="MIM" id="607793">
    <property type="type" value="gene"/>
</dbReference>
<dbReference type="neXtProt" id="NX_Q9NQ55"/>
<dbReference type="OpenTargets" id="ENSG00000130810"/>
<dbReference type="OpenTargets" id="ENSG00000243207"/>
<dbReference type="PharmGKB" id="PA162399971"/>
<dbReference type="VEuPathDB" id="HostDB:ENSG00000130810"/>
<dbReference type="eggNOG" id="KOG2963">
    <property type="taxonomic scope" value="Eukaryota"/>
</dbReference>
<dbReference type="GeneTree" id="ENSGT00530000064158"/>
<dbReference type="HOGENOM" id="CLU_026936_0_1_1"/>
<dbReference type="InParanoid" id="Q9NQ55"/>
<dbReference type="OMA" id="KDYTVMT"/>
<dbReference type="OrthoDB" id="10261452at2759"/>
<dbReference type="PAN-GO" id="Q9NQ55">
    <property type="GO annotations" value="3 GO annotations based on evolutionary models"/>
</dbReference>
<dbReference type="PhylomeDB" id="Q9NQ55"/>
<dbReference type="TreeFam" id="TF318923"/>
<dbReference type="PathwayCommons" id="Q9NQ55"/>
<dbReference type="SignaLink" id="Q9NQ55"/>
<dbReference type="BioGRID-ORCS" id="56342">
    <property type="hits" value="765 hits in 1131 CRISPR screens"/>
</dbReference>
<dbReference type="BioGRID-ORCS" id="692312">
    <property type="hits" value="248 hits in 997 CRISPR screens"/>
</dbReference>
<dbReference type="CD-CODE" id="91857CE7">
    <property type="entry name" value="Nucleolus"/>
</dbReference>
<dbReference type="GeneWiki" id="PPAN"/>
<dbReference type="Pharos" id="Q9NQ55">
    <property type="development level" value="Tbio"/>
</dbReference>
<dbReference type="PRO" id="PR:Q9NQ55"/>
<dbReference type="Proteomes" id="UP000005640">
    <property type="component" value="Chromosome 19"/>
</dbReference>
<dbReference type="RNAct" id="Q9NQ55">
    <property type="molecule type" value="protein"/>
</dbReference>
<dbReference type="Bgee" id="ENSG00000130810">
    <property type="expression patterns" value="Expressed in sural nerve and 151 other cell types or tissues"/>
</dbReference>
<dbReference type="ExpressionAtlas" id="Q9NQ55">
    <property type="expression patterns" value="baseline and differential"/>
</dbReference>
<dbReference type="GO" id="GO:0005730">
    <property type="term" value="C:nucleolus"/>
    <property type="evidence" value="ECO:0007669"/>
    <property type="project" value="UniProtKB-SubCell"/>
</dbReference>
<dbReference type="GO" id="GO:0005634">
    <property type="term" value="C:nucleus"/>
    <property type="evidence" value="ECO:0000314"/>
    <property type="project" value="MGI"/>
</dbReference>
<dbReference type="GO" id="GO:0030687">
    <property type="term" value="C:preribosome, large subunit precursor"/>
    <property type="evidence" value="ECO:0000318"/>
    <property type="project" value="GO_Central"/>
</dbReference>
<dbReference type="GO" id="GO:0003723">
    <property type="term" value="F:RNA binding"/>
    <property type="evidence" value="ECO:0007005"/>
    <property type="project" value="UniProtKB"/>
</dbReference>
<dbReference type="GO" id="GO:0019843">
    <property type="term" value="F:rRNA binding"/>
    <property type="evidence" value="ECO:0000318"/>
    <property type="project" value="GO_Central"/>
</dbReference>
<dbReference type="GO" id="GO:0000463">
    <property type="term" value="P:maturation of LSU-rRNA from tricistronic rRNA transcript (SSU-rRNA, 5.8S rRNA, LSU-rRNA)"/>
    <property type="evidence" value="ECO:0000318"/>
    <property type="project" value="GO_Central"/>
</dbReference>
<dbReference type="InterPro" id="IPR007109">
    <property type="entry name" value="Brix"/>
</dbReference>
<dbReference type="InterPro" id="IPR045112">
    <property type="entry name" value="PPAN-like"/>
</dbReference>
<dbReference type="PANTHER" id="PTHR12661">
    <property type="entry name" value="PETER PAN-RELATED"/>
    <property type="match status" value="1"/>
</dbReference>
<dbReference type="PANTHER" id="PTHR12661:SF5">
    <property type="entry name" value="SUPPRESSOR OF SWI4 1 HOMOLOG"/>
    <property type="match status" value="1"/>
</dbReference>
<dbReference type="Pfam" id="PF04427">
    <property type="entry name" value="Brix"/>
    <property type="match status" value="1"/>
</dbReference>
<dbReference type="SMART" id="SM00879">
    <property type="entry name" value="Brix"/>
    <property type="match status" value="1"/>
</dbReference>
<dbReference type="PROSITE" id="PS50833">
    <property type="entry name" value="BRIX"/>
    <property type="match status" value="1"/>
</dbReference>
<evidence type="ECO:0000250" key="1">
    <source>
        <dbReference type="UniProtKB" id="Q91YU8"/>
    </source>
</evidence>
<evidence type="ECO:0000255" key="2">
    <source>
        <dbReference type="PROSITE-ProRule" id="PRU00034"/>
    </source>
</evidence>
<evidence type="ECO:0000256" key="3">
    <source>
        <dbReference type="SAM" id="MobiDB-lite"/>
    </source>
</evidence>
<evidence type="ECO:0000269" key="4">
    <source>
    </source>
</evidence>
<evidence type="ECO:0000269" key="5">
    <source>
    </source>
</evidence>
<evidence type="ECO:0000269" key="6">
    <source>
    </source>
</evidence>
<evidence type="ECO:0000303" key="7">
    <source>
    </source>
</evidence>
<evidence type="ECO:0000305" key="8"/>
<evidence type="ECO:0000305" key="9">
    <source>
    </source>
</evidence>
<gene>
    <name type="primary">PPAN</name>
    <name type="synonym">BXDC3</name>
    <name type="synonym">SSF1</name>
</gene>
<accession>Q9NQ55</accession>
<accession>C9J3F9</accession>
<accession>Q9BW97</accession>
<accession>Q9H170</accession>
<name>SSF1_HUMAN</name>
<proteinExistence type="evidence at protein level"/>
<feature type="chain" id="PRO_0000120257" description="Suppressor of SWI4 1 homolog">
    <location>
        <begin position="1"/>
        <end position="473"/>
    </location>
</feature>
<feature type="domain" description="Brix" evidence="2">
    <location>
        <begin position="29"/>
        <end position="292"/>
    </location>
</feature>
<feature type="region of interest" description="Disordered" evidence="3">
    <location>
        <begin position="323"/>
        <end position="473"/>
    </location>
</feature>
<feature type="compositionally biased region" description="Low complexity" evidence="3">
    <location>
        <begin position="324"/>
        <end position="334"/>
    </location>
</feature>
<feature type="compositionally biased region" description="Basic and acidic residues" evidence="3">
    <location>
        <begin position="335"/>
        <end position="352"/>
    </location>
</feature>
<feature type="compositionally biased region" description="Acidic residues" evidence="3">
    <location>
        <begin position="375"/>
        <end position="388"/>
    </location>
</feature>
<feature type="compositionally biased region" description="Basic residues" evidence="3">
    <location>
        <begin position="409"/>
        <end position="421"/>
    </location>
</feature>
<feature type="compositionally biased region" description="Basic and acidic residues" evidence="3">
    <location>
        <begin position="422"/>
        <end position="443"/>
    </location>
</feature>
<feature type="compositionally biased region" description="Basic residues" evidence="3">
    <location>
        <begin position="462"/>
        <end position="473"/>
    </location>
</feature>
<feature type="modified residue" description="Phosphoserine" evidence="1">
    <location>
        <position position="238"/>
    </location>
</feature>
<feature type="modified residue" description="Phosphoserine" evidence="1">
    <location>
        <position position="240"/>
    </location>
</feature>
<feature type="modified residue" description="Phosphoserine" evidence="1">
    <location>
        <position position="359"/>
    </location>
</feature>
<feature type="modified residue" description="N6-acetyllysine" evidence="1">
    <location>
        <position position="438"/>
    </location>
</feature>
<feature type="splice variant" id="VSP_003973" description="In isoform 2." evidence="7">
    <location>
        <begin position="444"/>
        <end position="456"/>
    </location>
</feature>
<feature type="splice variant" id="VSP_046377" description="In isoform 3." evidence="7">
    <original>ARRGPRGASRDGGRGRGRGRPGKRVA</original>
    <variation>VPSPALPTSWQLPTTNSVGSRGTSCGPYWWLSSWWPWPAMAWPCTASASGSSAHGTPPWSSLSSWQSATCSAP</variation>
    <location>
        <begin position="448"/>
        <end position="473"/>
    </location>
</feature>
<feature type="sequence variant" id="VAR_022157" description="In dbSNP:rs2305793.">
    <original>G</original>
    <variation>V</variation>
    <location>
        <position position="358"/>
    </location>
</feature>
<feature type="sequence variant" id="VAR_048422" description="In dbSNP:rs11559188.">
    <original>Q</original>
    <variation>R</variation>
    <location>
        <position position="408"/>
    </location>
</feature>
<feature type="sequence conflict" description="In Ref. 3; BC171852." evidence="8" ref="3">
    <original>P</original>
    <variation>L</variation>
    <location sequence="Q9NQ55-3">
        <position position="520"/>
    </location>
</feature>
<reference key="1">
    <citation type="journal article" date="2000" name="Biochem. Biophys. Res. Commun.">
        <title>Cloning, genomic organization, and tissue distribution of human Ssf-1.</title>
        <authorList>
            <person name="Suarez-Huerta N."/>
            <person name="Boeynaems J.-M."/>
            <person name="Communi D."/>
        </authorList>
    </citation>
    <scope>NUCLEOTIDE SEQUENCE [MRNA] (ISOFORM 1)</scope>
    <scope>TISSUE SPECIFICITY</scope>
    <source>
        <tissue>Placenta</tissue>
    </source>
</reference>
<reference key="2">
    <citation type="journal article" date="2004" name="Nature">
        <title>The DNA sequence and biology of human chromosome 19.</title>
        <authorList>
            <person name="Grimwood J."/>
            <person name="Gordon L.A."/>
            <person name="Olsen A.S."/>
            <person name="Terry A."/>
            <person name="Schmutz J."/>
            <person name="Lamerdin J.E."/>
            <person name="Hellsten U."/>
            <person name="Goodstein D."/>
            <person name="Couronne O."/>
            <person name="Tran-Gyamfi M."/>
            <person name="Aerts A."/>
            <person name="Altherr M."/>
            <person name="Ashworth L."/>
            <person name="Bajorek E."/>
            <person name="Black S."/>
            <person name="Branscomb E."/>
            <person name="Caenepeel S."/>
            <person name="Carrano A.V."/>
            <person name="Caoile C."/>
            <person name="Chan Y.M."/>
            <person name="Christensen M."/>
            <person name="Cleland C.A."/>
            <person name="Copeland A."/>
            <person name="Dalin E."/>
            <person name="Dehal P."/>
            <person name="Denys M."/>
            <person name="Detter J.C."/>
            <person name="Escobar J."/>
            <person name="Flowers D."/>
            <person name="Fotopulos D."/>
            <person name="Garcia C."/>
            <person name="Georgescu A.M."/>
            <person name="Glavina T."/>
            <person name="Gomez M."/>
            <person name="Gonzales E."/>
            <person name="Groza M."/>
            <person name="Hammon N."/>
            <person name="Hawkins T."/>
            <person name="Haydu L."/>
            <person name="Ho I."/>
            <person name="Huang W."/>
            <person name="Israni S."/>
            <person name="Jett J."/>
            <person name="Kadner K."/>
            <person name="Kimball H."/>
            <person name="Kobayashi A."/>
            <person name="Larionov V."/>
            <person name="Leem S.-H."/>
            <person name="Lopez F."/>
            <person name="Lou Y."/>
            <person name="Lowry S."/>
            <person name="Malfatti S."/>
            <person name="Martinez D."/>
            <person name="McCready P.M."/>
            <person name="Medina C."/>
            <person name="Morgan J."/>
            <person name="Nelson K."/>
            <person name="Nolan M."/>
            <person name="Ovcharenko I."/>
            <person name="Pitluck S."/>
            <person name="Pollard M."/>
            <person name="Popkie A.P."/>
            <person name="Predki P."/>
            <person name="Quan G."/>
            <person name="Ramirez L."/>
            <person name="Rash S."/>
            <person name="Retterer J."/>
            <person name="Rodriguez A."/>
            <person name="Rogers S."/>
            <person name="Salamov A."/>
            <person name="Salazar A."/>
            <person name="She X."/>
            <person name="Smith D."/>
            <person name="Slezak T."/>
            <person name="Solovyev V."/>
            <person name="Thayer N."/>
            <person name="Tice H."/>
            <person name="Tsai M."/>
            <person name="Ustaszewska A."/>
            <person name="Vo N."/>
            <person name="Wagner M."/>
            <person name="Wheeler J."/>
            <person name="Wu K."/>
            <person name="Xie G."/>
            <person name="Yang J."/>
            <person name="Dubchak I."/>
            <person name="Furey T.S."/>
            <person name="DeJong P."/>
            <person name="Dickson M."/>
            <person name="Gordon D."/>
            <person name="Eichler E.E."/>
            <person name="Pennacchio L.A."/>
            <person name="Richardson P."/>
            <person name="Stubbs L."/>
            <person name="Rokhsar D.S."/>
            <person name="Myers R.M."/>
            <person name="Rubin E.M."/>
            <person name="Lucas S.M."/>
        </authorList>
    </citation>
    <scope>NUCLEOTIDE SEQUENCE [LARGE SCALE GENOMIC DNA]</scope>
</reference>
<reference key="3">
    <citation type="journal article" date="2004" name="Genome Res.">
        <title>The status, quality, and expansion of the NIH full-length cDNA project: the Mammalian Gene Collection (MGC).</title>
        <authorList>
            <consortium name="The MGC Project Team"/>
        </authorList>
    </citation>
    <scope>NUCLEOTIDE SEQUENCE [LARGE SCALE MRNA] (ISOFORMS 1; 2 AND 3)</scope>
    <source>
        <tissue>Brain</tissue>
        <tissue>Placenta</tissue>
        <tissue>Skin</tissue>
    </source>
</reference>
<reference key="4">
    <citation type="journal article" date="2001" name="J. Biol. Chem.">
        <title>Cotranscription and intergenic splicing of human P2Y11 and SSF1 genes.</title>
        <authorList>
            <person name="Communi D."/>
            <person name="Suarez-Huerta N."/>
            <person name="Dussossoy D."/>
            <person name="Savi P."/>
            <person name="Boeynaems J.-M."/>
        </authorList>
    </citation>
    <scope>NUCLEOTIDE SEQUENCE [MRNA] OF 1-427</scope>
    <scope>TISSUE SPECIFICITY</scope>
    <scope>TRANS-SPLICING</scope>
    <source>
        <tissue>Placenta</tissue>
    </source>
</reference>
<reference key="5">
    <citation type="journal article" date="2002" name="Mol. Biol. Cell">
        <title>Functional proteomic analysis of human nucleolus.</title>
        <authorList>
            <person name="Scherl A."/>
            <person name="Coute Y."/>
            <person name="Deon C."/>
            <person name="Calle A."/>
            <person name="Kindbeiter K."/>
            <person name="Sanchez J.-C."/>
            <person name="Greco A."/>
            <person name="Hochstrasser D.F."/>
            <person name="Diaz J.-J."/>
        </authorList>
    </citation>
    <scope>SUBCELLULAR LOCATION [LARGE SCALE ANALYSIS]</scope>
    <source>
        <tissue>Cervix carcinoma</tissue>
    </source>
</reference>
<sequence length="473" mass="53194">MGQSGRSRHQKRARAQAQLRNLEAYAANPHSFVFTRGCTGRNIRQLSLDVRRVMEPLTASRLQVRKKNSLKDCVAVAGPLGVTHFLILSKTETNVYFKLMRLPGGPTLTFQVKKYSLVRDVVSSLRRHRMHEQQFAHPPLLVLNSFGPHGMHVKLMATMFQNLFPSINVHKVNLNTIKRCLLIDYNPDSQELDFRHYSIKVVPVGASRGMKKLLQEKFPNMSRLQDISELLATGAGLSESEAEPDGDHNITELPQAVAGRGNMRAQQSAVRLTEIGPRMTLQLIKVQEGVGEGKVMFHSFVSKTEEELQAILEAKEKKLRLKAQRQAQQAQNVQRKQEQREAHRKKSLEGMKKARVGGSDEEASGIPSRTASLELGEDDDEQEDDDIEYFCQAVGEAPSEDLFPEAKQKRLAKSPGRKRKRWEMDRGRGRLCDQKFPKTKDKSQGAQARRGPRGASRDGGRGRGRGRPGKRVA</sequence>
<comment type="function">
    <text>May have a role in cell growth.</text>
</comment>
<comment type="subcellular location">
    <subcellularLocation>
        <location evidence="6">Nucleus</location>
        <location evidence="6">Nucleolus</location>
    </subcellularLocation>
</comment>
<comment type="alternative products">
    <event type="alternative splicing"/>
    <isoform>
        <id>Q9NQ55-1</id>
        <name>1</name>
        <sequence type="displayed"/>
    </isoform>
    <isoform>
        <id>Q9NQ55-2</id>
        <name>2</name>
        <sequence type="described" ref="VSP_003973"/>
    </isoform>
    <isoform>
        <id>Q9NQ55-3</id>
        <name>3</name>
        <sequence type="described" ref="VSP_046377"/>
    </isoform>
</comment>
<comment type="tissue specificity">
    <text evidence="4 5">Widely expressed.</text>
</comment>
<comment type="miscellaneous">
    <text evidence="9">A chimeric transcript, characterized by the first third of PPAN exon 12 joined to P2RY11 exon 2, has been detected. It is possibly produced by trans-splicing. The chimeric transcript is widely expressed and can be induced by retinoic acid during the granulocytic differentiation of the HL-60 cell line. The resulting chimeric protein shows a much lower activity than the non-chimeric P2RY11 gene product, but qualitatively indistinguishable (PubMed:11278528).</text>
</comment>
<keyword id="KW-0002">3D-structure</keyword>
<keyword id="KW-0007">Acetylation</keyword>
<keyword id="KW-0025">Alternative splicing</keyword>
<keyword id="KW-0539">Nucleus</keyword>
<keyword id="KW-0597">Phosphoprotein</keyword>
<keyword id="KW-1267">Proteomics identification</keyword>
<keyword id="KW-1185">Reference proteome</keyword>